<proteinExistence type="inferred from homology"/>
<name>PLSY_SALPB</name>
<accession>A9N5Y5</accession>
<protein>
    <recommendedName>
        <fullName evidence="1">Glycerol-3-phosphate acyltransferase</fullName>
    </recommendedName>
    <alternativeName>
        <fullName evidence="1">G3P acyltransferase</fullName>
        <shortName evidence="1">GPAT</shortName>
        <ecNumber evidence="1">2.3.1.15</ecNumber>
        <ecNumber evidence="1">2.3.1.n5</ecNumber>
    </alternativeName>
    <alternativeName>
        <fullName evidence="1">Lysophosphatidic acid synthase</fullName>
        <shortName evidence="1">LPA synthase</shortName>
    </alternativeName>
</protein>
<organism>
    <name type="scientific">Salmonella paratyphi B (strain ATCC BAA-1250 / SPB7)</name>
    <dbReference type="NCBI Taxonomy" id="1016998"/>
    <lineage>
        <taxon>Bacteria</taxon>
        <taxon>Pseudomonadati</taxon>
        <taxon>Pseudomonadota</taxon>
        <taxon>Gammaproteobacteria</taxon>
        <taxon>Enterobacterales</taxon>
        <taxon>Enterobacteriaceae</taxon>
        <taxon>Salmonella</taxon>
    </lineage>
</organism>
<evidence type="ECO:0000255" key="1">
    <source>
        <dbReference type="HAMAP-Rule" id="MF_01043"/>
    </source>
</evidence>
<keyword id="KW-0997">Cell inner membrane</keyword>
<keyword id="KW-1003">Cell membrane</keyword>
<keyword id="KW-0444">Lipid biosynthesis</keyword>
<keyword id="KW-0443">Lipid metabolism</keyword>
<keyword id="KW-0472">Membrane</keyword>
<keyword id="KW-0594">Phospholipid biosynthesis</keyword>
<keyword id="KW-1208">Phospholipid metabolism</keyword>
<keyword id="KW-0808">Transferase</keyword>
<keyword id="KW-0812">Transmembrane</keyword>
<keyword id="KW-1133">Transmembrane helix</keyword>
<sequence>MSAIAPGMILFAYLCGSISSAILVCRIAGLPDPRESGSGNPGATNVLRIGGKGAAVAVLIFDILKGMLPVWGAYALGVTPFWLGLIAIAACLGHIWPVFFGFKGGKGVATAFGAIAPIGWDLTGVMAGTWLLTVLLSGYSSLGAIVSALIAPFYVWWFKPQFTFPVSMLSCLILLRHHDNIQRLWRRQETKIWTKLKKKRQKD</sequence>
<reference key="1">
    <citation type="submission" date="2007-11" db="EMBL/GenBank/DDBJ databases">
        <authorList>
            <consortium name="The Salmonella enterica serovar Paratyphi B Genome Sequencing Project"/>
            <person name="McClelland M."/>
            <person name="Sanderson E.K."/>
            <person name="Porwollik S."/>
            <person name="Spieth J."/>
            <person name="Clifton W.S."/>
            <person name="Fulton R."/>
            <person name="Cordes M."/>
            <person name="Wollam A."/>
            <person name="Shah N."/>
            <person name="Pepin K."/>
            <person name="Bhonagiri V."/>
            <person name="Nash W."/>
            <person name="Johnson M."/>
            <person name="Thiruvilangam P."/>
            <person name="Wilson R."/>
        </authorList>
    </citation>
    <scope>NUCLEOTIDE SEQUENCE [LARGE SCALE GENOMIC DNA]</scope>
    <source>
        <strain>ATCC BAA-1250 / SPB7</strain>
    </source>
</reference>
<gene>
    <name evidence="1" type="primary">plsY</name>
    <name type="synonym">ygiH</name>
    <name type="ordered locus">SPAB_04002</name>
</gene>
<comment type="function">
    <text evidence="1">Catalyzes the transfer of an acyl group from acyl-ACP to glycerol-3-phosphate (G3P) to form lysophosphatidic acid (LPA). This enzyme can also utilize acyl-CoA as fatty acyl donor, but not acyl-PO(4).</text>
</comment>
<comment type="catalytic activity">
    <reaction evidence="1">
        <text>sn-glycerol 3-phosphate + an acyl-CoA = a 1-acyl-sn-glycero-3-phosphate + CoA</text>
        <dbReference type="Rhea" id="RHEA:15325"/>
        <dbReference type="ChEBI" id="CHEBI:57287"/>
        <dbReference type="ChEBI" id="CHEBI:57597"/>
        <dbReference type="ChEBI" id="CHEBI:57970"/>
        <dbReference type="ChEBI" id="CHEBI:58342"/>
        <dbReference type="EC" id="2.3.1.15"/>
    </reaction>
</comment>
<comment type="catalytic activity">
    <reaction evidence="1">
        <text>a fatty acyl-[ACP] + sn-glycerol 3-phosphate = a 1-acyl-sn-glycero-3-phosphate + holo-[ACP]</text>
        <dbReference type="Rhea" id="RHEA:42300"/>
        <dbReference type="Rhea" id="RHEA-COMP:9685"/>
        <dbReference type="Rhea" id="RHEA-COMP:14125"/>
        <dbReference type="ChEBI" id="CHEBI:57597"/>
        <dbReference type="ChEBI" id="CHEBI:57970"/>
        <dbReference type="ChEBI" id="CHEBI:64479"/>
        <dbReference type="ChEBI" id="CHEBI:138651"/>
        <dbReference type="EC" id="2.3.1.n5"/>
    </reaction>
</comment>
<comment type="pathway">
    <text evidence="1">Lipid metabolism; phospholipid metabolism.</text>
</comment>
<comment type="subunit">
    <text evidence="1">Probably interacts with PlsX.</text>
</comment>
<comment type="subcellular location">
    <subcellularLocation>
        <location evidence="1">Cell inner membrane</location>
        <topology evidence="1">Multi-pass membrane protein</topology>
    </subcellularLocation>
</comment>
<comment type="similarity">
    <text evidence="1">Belongs to the PlsY family.</text>
</comment>
<feature type="chain" id="PRO_1000084393" description="Glycerol-3-phosphate acyltransferase">
    <location>
        <begin position="1"/>
        <end position="203"/>
    </location>
</feature>
<feature type="topological domain" description="Periplasmic" evidence="1">
    <location>
        <begin position="1"/>
        <end position="3"/>
    </location>
</feature>
<feature type="transmembrane region" description="Helical" evidence="1">
    <location>
        <begin position="4"/>
        <end position="24"/>
    </location>
</feature>
<feature type="topological domain" description="Cytoplasmic" evidence="1">
    <location>
        <begin position="25"/>
        <end position="52"/>
    </location>
</feature>
<feature type="transmembrane region" description="Helical" evidence="1">
    <location>
        <begin position="53"/>
        <end position="73"/>
    </location>
</feature>
<feature type="topological domain" description="Periplasmic" evidence="1">
    <location>
        <begin position="74"/>
        <end position="80"/>
    </location>
</feature>
<feature type="transmembrane region" description="Helical" evidence="1">
    <location>
        <begin position="81"/>
        <end position="101"/>
    </location>
</feature>
<feature type="topological domain" description="Cytoplasmic" evidence="1">
    <location>
        <begin position="102"/>
        <end position="111"/>
    </location>
</feature>
<feature type="transmembrane region" description="Helical" evidence="1">
    <location>
        <begin position="112"/>
        <end position="132"/>
    </location>
</feature>
<feature type="topological domain" description="Periplasmic" evidence="1">
    <location>
        <begin position="133"/>
        <end position="137"/>
    </location>
</feature>
<feature type="transmembrane region" description="Helical" evidence="1">
    <location>
        <begin position="138"/>
        <end position="158"/>
    </location>
</feature>
<feature type="topological domain" description="Cytoplasmic" evidence="1">
    <location>
        <begin position="159"/>
        <end position="203"/>
    </location>
</feature>
<dbReference type="EC" id="2.3.1.15" evidence="1"/>
<dbReference type="EC" id="2.3.1.n5" evidence="1"/>
<dbReference type="EMBL" id="CP000886">
    <property type="protein sequence ID" value="ABX69331.1"/>
    <property type="molecule type" value="Genomic_DNA"/>
</dbReference>
<dbReference type="RefSeq" id="WP_001272784.1">
    <property type="nucleotide sequence ID" value="NC_010102.1"/>
</dbReference>
<dbReference type="SMR" id="A9N5Y5"/>
<dbReference type="KEGG" id="spq:SPAB_04002"/>
<dbReference type="PATRIC" id="fig|1016998.12.peg.3773"/>
<dbReference type="HOGENOM" id="CLU_081254_0_2_6"/>
<dbReference type="BioCyc" id="SENT1016998:SPAB_RS16255-MONOMER"/>
<dbReference type="UniPathway" id="UPA00085"/>
<dbReference type="Proteomes" id="UP000008556">
    <property type="component" value="Chromosome"/>
</dbReference>
<dbReference type="GO" id="GO:0005886">
    <property type="term" value="C:plasma membrane"/>
    <property type="evidence" value="ECO:0007669"/>
    <property type="project" value="UniProtKB-SubCell"/>
</dbReference>
<dbReference type="GO" id="GO:0043772">
    <property type="term" value="F:acyl-phosphate glycerol-3-phosphate acyltransferase activity"/>
    <property type="evidence" value="ECO:0007669"/>
    <property type="project" value="InterPro"/>
</dbReference>
<dbReference type="GO" id="GO:0004366">
    <property type="term" value="F:glycerol-3-phosphate O-acyltransferase activity"/>
    <property type="evidence" value="ECO:0007669"/>
    <property type="project" value="UniProtKB-UniRule"/>
</dbReference>
<dbReference type="GO" id="GO:0008654">
    <property type="term" value="P:phospholipid biosynthetic process"/>
    <property type="evidence" value="ECO:0007669"/>
    <property type="project" value="UniProtKB-UniRule"/>
</dbReference>
<dbReference type="HAMAP" id="MF_01043">
    <property type="entry name" value="PlsY"/>
    <property type="match status" value="1"/>
</dbReference>
<dbReference type="InterPro" id="IPR003811">
    <property type="entry name" value="G3P_acylTferase_PlsY"/>
</dbReference>
<dbReference type="NCBIfam" id="TIGR00023">
    <property type="entry name" value="glycerol-3-phosphate 1-O-acyltransferase PlsY"/>
    <property type="match status" value="1"/>
</dbReference>
<dbReference type="PANTHER" id="PTHR30309:SF0">
    <property type="entry name" value="GLYCEROL-3-PHOSPHATE ACYLTRANSFERASE-RELATED"/>
    <property type="match status" value="1"/>
</dbReference>
<dbReference type="PANTHER" id="PTHR30309">
    <property type="entry name" value="INNER MEMBRANE PROTEIN YGIH"/>
    <property type="match status" value="1"/>
</dbReference>
<dbReference type="Pfam" id="PF02660">
    <property type="entry name" value="G3P_acyltransf"/>
    <property type="match status" value="1"/>
</dbReference>
<dbReference type="SMART" id="SM01207">
    <property type="entry name" value="G3P_acyltransf"/>
    <property type="match status" value="1"/>
</dbReference>